<name>NEUM_RAT</name>
<keyword id="KW-0112">Calmodulin-binding</keyword>
<keyword id="KW-1003">Cell membrane</keyword>
<keyword id="KW-0966">Cell projection</keyword>
<keyword id="KW-0963">Cytoplasm</keyword>
<keyword id="KW-0217">Developmental protein</keyword>
<keyword id="KW-0221">Differentiation</keyword>
<keyword id="KW-0903">Direct protein sequencing</keyword>
<keyword id="KW-0341">Growth regulation</keyword>
<keyword id="KW-0449">Lipoprotein</keyword>
<keyword id="KW-0472">Membrane</keyword>
<keyword id="KW-0524">Neurogenesis</keyword>
<keyword id="KW-0564">Palmitate</keyword>
<keyword id="KW-0597">Phosphoprotein</keyword>
<keyword id="KW-1185">Reference proteome</keyword>
<keyword id="KW-0770">Synapse</keyword>
<reference key="1">
    <citation type="journal article" date="1987" name="Science">
        <title>Cloning of complementary DNA for GAP-43, a neuronal growth-related protein.</title>
        <authorList>
            <person name="Karns L.R."/>
            <person name="Ng S.-C."/>
            <person name="Freeman J.A."/>
            <person name="Fishman M.C."/>
        </authorList>
    </citation>
    <scope>NUCLEOTIDE SEQUENCE [MRNA]</scope>
    <scope>PARTIAL PROTEIN SEQUENCE</scope>
</reference>
<reference key="2">
    <citation type="journal article" date="1987" name="Cell">
        <title>Primary structure and transcriptional regulation of GAP-43, a protein associated with nerve growth.</title>
        <authorList>
            <person name="Basi G.S."/>
            <person name="Jacobson R.D."/>
            <person name="Virag I."/>
            <person name="Schilling J."/>
            <person name="Skene J.H.P."/>
        </authorList>
    </citation>
    <scope>NUCLEOTIDE SEQUENCE [MRNA]</scope>
    <scope>PROTEIN SEQUENCE OF 8-25</scope>
</reference>
<reference key="3">
    <citation type="journal article" date="1987" name="EMBO J.">
        <title>Primary structure and mRNA localization of protein F1, a growth-related protein kinase C substrate associated with synaptic plasticity.</title>
        <authorList>
            <person name="Rosenthal A."/>
            <person name="Chan S.Y."/>
            <person name="Henzel W."/>
            <person name="Haskell C."/>
            <person name="Kuang W.J."/>
            <person name="Chen E."/>
            <person name="Wilcox J.N."/>
            <person name="Ullrich A."/>
            <person name="Goeddel D.V."/>
            <person name="Routtenberg A."/>
        </authorList>
    </citation>
    <scope>NUCLEOTIDE SEQUENCE [MRNA]</scope>
    <scope>PARTIAL PROTEIN SEQUENCE</scope>
</reference>
<reference key="4">
    <citation type="journal article" date="1990" name="Eur. J. Neurosci.">
        <title>Cloning and characterization of the rat gene encoding GAP-43.</title>
        <authorList>
            <person name="Grabczyk E."/>
            <person name="Zuber M.X."/>
            <person name="Federoff H.J."/>
            <person name="Ng S.C."/>
            <person name="Pack A."/>
            <person name="Fishman M.C."/>
        </authorList>
    </citation>
    <scope>NUCLEOTIDE SEQUENCE [GENOMIC DNA]</scope>
</reference>
<reference key="5">
    <citation type="journal article" date="2004" name="Genome Res.">
        <title>The status, quality, and expansion of the NIH full-length cDNA project: the Mammalian Gene Collection (MGC).</title>
        <authorList>
            <consortium name="The MGC Project Team"/>
        </authorList>
    </citation>
    <scope>NUCLEOTIDE SEQUENCE [LARGE SCALE MRNA]</scope>
    <source>
        <tissue>Brain</tissue>
    </source>
</reference>
<reference key="6">
    <citation type="submission" date="2007-09" db="UniProtKB">
        <authorList>
            <person name="Lubec G."/>
            <person name="Chen W.-Q."/>
            <person name="Kang S.U."/>
            <person name="Lubec S."/>
        </authorList>
    </citation>
    <scope>PROTEIN SEQUENCE OF 20-30; 38-43; 68-80 AND 158-180</scope>
    <scope>IDENTIFICATION BY MASS SPECTROMETRY</scope>
    <source>
        <strain>Sprague-Dawley</strain>
        <tissue>Brain</tissue>
        <tissue>Hippocampus</tissue>
    </source>
</reference>
<reference key="7">
    <citation type="journal article" date="1992" name="J. Biol. Chem.">
        <title>GAP-43, a protein associated with axon growth, is phosphorylated at three sites in cultured neurons and rat brain.</title>
        <authorList>
            <person name="Spencer S.A."/>
            <person name="Schuh S.M."/>
            <person name="Liu W.-S."/>
            <person name="Willard M.B."/>
        </authorList>
    </citation>
    <scope>PHOSPHORYLATION AT SER-41; SER-96 AND THR-172</scope>
</reference>
<reference key="8">
    <citation type="journal article" date="1993" name="J. Biol. Chem.">
        <title>Phosphorylase kinase phosphorylates the calmodulin-binding regulatory regions of neuronal tissue-specific proteins B-50 (GAP-43) and neurogranin.</title>
        <authorList>
            <person name="Paudel H.K."/>
            <person name="Zwiers H."/>
            <person name="Wang J.H."/>
        </authorList>
    </citation>
    <scope>PHOSPHORYLATION AT SER-41 BY PHK</scope>
</reference>
<reference key="9">
    <citation type="journal article" date="2000" name="Mol. Biol. Cell">
        <title>The RNA-binding protein HuD is required for GAP-43 mRNA stability, GAP-43 gene expression, and PKC-dependent neurite outgrowth in PC12 cells.</title>
        <authorList>
            <person name="Mobarak C.D."/>
            <person name="Anderson K.D."/>
            <person name="Morin M."/>
            <person name="Beckel-Mitchener A."/>
            <person name="Rogers S.L."/>
            <person name="Furneaux H."/>
            <person name="King P."/>
            <person name="Perrone-Bizzozero N.I."/>
        </authorList>
    </citation>
    <scope>SUBCELLULAR LOCATION</scope>
</reference>
<reference key="10">
    <citation type="journal article" date="2002" name="J. Neurosci. Res.">
        <title>Role of HuD and other RNA-binding proteins in neural development and plasticity.</title>
        <authorList>
            <person name="Perrone-Bizzozero N."/>
            <person name="Bolognani F."/>
        </authorList>
    </citation>
    <scope>TISSUE SPECIFICITY</scope>
</reference>
<reference key="11">
    <citation type="journal article" date="2003" name="Exp. Neurol.">
        <title>Increased expression and localization of the RNA-binding protein HuD and GAP-43 mRNA to cytoplasmic granules in DRG neurons during nerve regeneration.</title>
        <authorList>
            <person name="Anderson K.D."/>
            <person name="Merhege M.A."/>
            <person name="Morin M."/>
            <person name="Bolognani F."/>
            <person name="Perrone-Bizzozero N.I."/>
        </authorList>
    </citation>
    <scope>SUBCELLULAR LOCATION</scope>
    <scope>TISSUE SPECIFICITY</scope>
    <scope>INDUCTION BY AXOTOMY</scope>
</reference>
<reference key="12">
    <citation type="journal article" date="2007" name="Neurochem. Res.">
        <title>Coordinated expression of HuD and GAP-43 in hippocampal dentate granule cells during developmental and adult plasticity.</title>
        <authorList>
            <person name="Bolognani F."/>
            <person name="Tanner D.C."/>
            <person name="Nixon S."/>
            <person name="Okano H.J."/>
            <person name="Okano H."/>
            <person name="Perrone-Bizzozero N.I."/>
        </authorList>
    </citation>
    <scope>TISSUE SPECIFICITY</scope>
    <scope>DEVELOPMENTAL STAGE</scope>
    <scope>INDUCTION BY SEIZURE</scope>
</reference>
<reference key="13">
    <citation type="submission" date="2007-02" db="UniProtKB">
        <authorList>
            <person name="Lubec G."/>
            <person name="Chen W.-Q."/>
        </authorList>
    </citation>
    <scope>PHOSPHORYLATION AT THR-172</scope>
    <scope>IDENTIFICATION BY MASS SPECTROMETRY</scope>
</reference>
<reference key="14">
    <citation type="journal article" date="2012" name="Nat. Commun.">
        <title>Quantitative maps of protein phosphorylation sites across 14 different rat organs and tissues.</title>
        <authorList>
            <person name="Lundby A."/>
            <person name="Secher A."/>
            <person name="Lage K."/>
            <person name="Nordsborg N.B."/>
            <person name="Dmytriyev A."/>
            <person name="Lundby C."/>
            <person name="Olsen J.V."/>
        </authorList>
    </citation>
    <scope>PHOSPHORYLATION [LARGE SCALE ANALYSIS] AT SER-86; SER-96; THR-172; SER-191 AND SER-192</scope>
    <scope>IDENTIFICATION BY MASS SPECTROMETRY [LARGE SCALE ANALYSIS]</scope>
</reference>
<gene>
    <name type="primary">Gap43</name>
</gene>
<accession>P07936</accession>
<accession>A0JPM4</accession>
<proteinExistence type="evidence at protein level"/>
<organism>
    <name type="scientific">Rattus norvegicus</name>
    <name type="common">Rat</name>
    <dbReference type="NCBI Taxonomy" id="10116"/>
    <lineage>
        <taxon>Eukaryota</taxon>
        <taxon>Metazoa</taxon>
        <taxon>Chordata</taxon>
        <taxon>Craniata</taxon>
        <taxon>Vertebrata</taxon>
        <taxon>Euteleostomi</taxon>
        <taxon>Mammalia</taxon>
        <taxon>Eutheria</taxon>
        <taxon>Euarchontoglires</taxon>
        <taxon>Glires</taxon>
        <taxon>Rodentia</taxon>
        <taxon>Myomorpha</taxon>
        <taxon>Muroidea</taxon>
        <taxon>Muridae</taxon>
        <taxon>Murinae</taxon>
        <taxon>Rattus</taxon>
    </lineage>
</organism>
<sequence>MLCCMRRTKQVEKNDEDQKIEQDGVKPEDKAHKAATKIQASFRGHITRKKLKDEKKGDAPAAEAEAKEKDDAPVADGVEKKEGDGSATTDAAPATSPKAEEPSKAGDAPSEEKKGEGDAAPSEEKAGSAETESAAKATTDNSPSSKAEDGPAKEEPKQADVPAAVTDAAATTPAAEDAAKAAQPPTETAESSQAEEEKEAVDEAKPKESARQDEGKEDPEADQEHA</sequence>
<feature type="chain" id="PRO_0000159599" description="Neuromodulin">
    <location>
        <begin position="1"/>
        <end position="226"/>
    </location>
</feature>
<feature type="domain" description="IQ" evidence="4">
    <location>
        <begin position="31"/>
        <end position="60"/>
    </location>
</feature>
<feature type="region of interest" description="Disordered" evidence="5">
    <location>
        <begin position="1"/>
        <end position="226"/>
    </location>
</feature>
<feature type="compositionally biased region" description="Basic and acidic residues" evidence="5">
    <location>
        <begin position="9"/>
        <end position="32"/>
    </location>
</feature>
<feature type="compositionally biased region" description="Basic and acidic residues" evidence="5">
    <location>
        <begin position="51"/>
        <end position="84"/>
    </location>
</feature>
<feature type="compositionally biased region" description="Low complexity" evidence="5">
    <location>
        <begin position="85"/>
        <end position="97"/>
    </location>
</feature>
<feature type="compositionally biased region" description="Basic and acidic residues" evidence="5">
    <location>
        <begin position="98"/>
        <end position="127"/>
    </location>
</feature>
<feature type="compositionally biased region" description="Low complexity" evidence="5">
    <location>
        <begin position="128"/>
        <end position="139"/>
    </location>
</feature>
<feature type="compositionally biased region" description="Basic and acidic residues" evidence="5">
    <location>
        <begin position="146"/>
        <end position="158"/>
    </location>
</feature>
<feature type="compositionally biased region" description="Low complexity" evidence="5">
    <location>
        <begin position="159"/>
        <end position="192"/>
    </location>
</feature>
<feature type="compositionally biased region" description="Basic and acidic residues" evidence="5">
    <location>
        <begin position="201"/>
        <end position="214"/>
    </location>
</feature>
<feature type="compositionally biased region" description="Acidic residues" evidence="5">
    <location>
        <begin position="215"/>
        <end position="226"/>
    </location>
</feature>
<feature type="modified residue" description="Phosphoserine; by PHK and PKC" evidence="9 11">
    <location>
        <position position="41"/>
    </location>
</feature>
<feature type="modified residue" description="Phosphoserine" evidence="14">
    <location>
        <position position="86"/>
    </location>
</feature>
<feature type="modified residue" description="Phosphoserine" evidence="9 14">
    <location>
        <position position="96"/>
    </location>
</feature>
<feature type="modified residue" description="Phosphoserine" evidence="2">
    <location>
        <position position="142"/>
    </location>
</feature>
<feature type="modified residue" description="Phosphoserine" evidence="2">
    <location>
        <position position="144"/>
    </location>
</feature>
<feature type="modified residue" description="Phosphoserine" evidence="2">
    <location>
        <position position="145"/>
    </location>
</feature>
<feature type="modified residue" description="Phosphothreonine" evidence="9 12 14">
    <location>
        <position position="172"/>
    </location>
</feature>
<feature type="modified residue" description="Phosphoserine" evidence="14">
    <location>
        <position position="191"/>
    </location>
</feature>
<feature type="modified residue" description="Phosphoserine" evidence="14">
    <location>
        <position position="192"/>
    </location>
</feature>
<feature type="lipid moiety-binding region" description="S-palmitoyl cysteine" evidence="1">
    <location>
        <position position="3"/>
    </location>
</feature>
<feature type="lipid moiety-binding region" description="S-palmitoyl cysteine" evidence="1">
    <location>
        <position position="4"/>
    </location>
</feature>
<comment type="function">
    <text evidence="3">This protein is associated with nerve growth. It is a major component of the motile 'growth cones' that form the tips of elongating axons. Plays a role in axonal and dendritic filopodia induction (By similarity).</text>
</comment>
<comment type="subunit">
    <text evidence="1 2">Identified in a complex containing FGFR4, NCAM1, CDH2, PLCG1, FRS2, SRC, SHC1, GAP43 and CTTN (By similarity). Interacts (via IQ domain) with calmodulin (By similarity). Binds calmodulin with a greater affinity in the absence of Ca(2+) than in its presence (By similarity).</text>
</comment>
<comment type="interaction">
    <interactant intactId="EBI-26438795">
        <id>P07936</id>
    </interactant>
    <interactant intactId="EBI-15348306">
        <id>Q5XIE8</id>
        <label>Itm2b</label>
    </interactant>
    <organismsDiffer>false</organismsDiffer>
    <experiments>3</experiments>
</comment>
<comment type="subcellular location">
    <subcellularLocation>
        <location evidence="3">Cell membrane</location>
        <topology evidence="3">Peripheral membrane protein</topology>
        <orientation evidence="3">Cytoplasmic side</orientation>
    </subcellularLocation>
    <subcellularLocation>
        <location evidence="6">Cell projection</location>
        <location evidence="6">Growth cone</location>
    </subcellularLocation>
    <subcellularLocation>
        <location evidence="3">Cell projection</location>
        <location evidence="3">Growth cone membrane</location>
        <topology evidence="3">Peripheral membrane protein</topology>
        <orientation evidence="3">Cytoplasmic side</orientation>
    </subcellularLocation>
    <subcellularLocation>
        <location evidence="3">Synapse</location>
    </subcellularLocation>
    <subcellularLocation>
        <location evidence="3">Cell projection</location>
        <location evidence="3">Filopodium membrane</location>
        <topology evidence="3">Peripheral membrane protein</topology>
    </subcellularLocation>
    <subcellularLocation>
        <location evidence="6 8">Perikaryon</location>
    </subcellularLocation>
    <subcellularLocation>
        <location evidence="6">Cell projection</location>
        <location evidence="6">Dendrite</location>
    </subcellularLocation>
    <subcellularLocation>
        <location evidence="6">Cell projection</location>
        <location evidence="6">Axon</location>
    </subcellularLocation>
    <subcellularLocation>
        <location evidence="6 8">Cytoplasm</location>
    </subcellularLocation>
    <text evidence="3">Cytoplasmic surface of growth cone and synaptic plasma membranes.</text>
</comment>
<comment type="tissue specificity">
    <text evidence="7 8 10">Expressed in hippocampal neurons, with highest levels of expression in the CA4 and CA3 neurons and lower levels in CA1 neurons (PubMed:11948657, PubMed:17577668). Expressed in the dorsal root ganglion (PubMed:12957493).</text>
</comment>
<comment type="developmental stage">
    <text evidence="10">Expression in dentate granule cells of the hippocampus at postnatal day P5, with disappearing expression in dentate granule cells as early as P14.</text>
</comment>
<comment type="induction">
    <text evidence="8 10">Up-regulated by kainic acid-induced seizures (PubMed:17577668). Up-regulated after axotomy (PubMed:12957493).</text>
</comment>
<comment type="PTM">
    <text evidence="9 11 12">Phosphorylated (PubMed:1533624, PubMed:8454596, Ref.13). Phosphorylation of this protein by a protein kinase C is specifically correlated with certain forms of synaptic plasticity (PubMed:1533624, PubMed:8454596, Ref.13).</text>
</comment>
<comment type="PTM">
    <text evidence="2 3">Palmitoylated by ZDHHC3 (By similarity). Palmitoylation is regulated by ARF6 and is essential for plasma membrane association and axonal and dendritic filopodia induction. Deacylated by LYPLA2 (By similarity).</text>
</comment>
<comment type="similarity">
    <text evidence="13">Belongs to the neuromodulin family.</text>
</comment>
<protein>
    <recommendedName>
        <fullName>Neuromodulin</fullName>
    </recommendedName>
    <alternativeName>
        <fullName>Axonal membrane protein GAP-43</fullName>
    </alternativeName>
    <alternativeName>
        <fullName>Growth-associated protein 43</fullName>
    </alternativeName>
    <alternativeName>
        <fullName>Protein F1</fullName>
    </alternativeName>
</protein>
<evidence type="ECO:0000250" key="1">
    <source>
        <dbReference type="UniProtKB" id="P06836"/>
    </source>
</evidence>
<evidence type="ECO:0000250" key="2">
    <source>
        <dbReference type="UniProtKB" id="P06837"/>
    </source>
</evidence>
<evidence type="ECO:0000250" key="3">
    <source>
        <dbReference type="UniProtKB" id="P17677"/>
    </source>
</evidence>
<evidence type="ECO:0000255" key="4">
    <source>
        <dbReference type="PROSITE-ProRule" id="PRU00116"/>
    </source>
</evidence>
<evidence type="ECO:0000256" key="5">
    <source>
        <dbReference type="SAM" id="MobiDB-lite"/>
    </source>
</evidence>
<evidence type="ECO:0000269" key="6">
    <source>
    </source>
</evidence>
<evidence type="ECO:0000269" key="7">
    <source>
    </source>
</evidence>
<evidence type="ECO:0000269" key="8">
    <source>
    </source>
</evidence>
<evidence type="ECO:0000269" key="9">
    <source>
    </source>
</evidence>
<evidence type="ECO:0000269" key="10">
    <source>
    </source>
</evidence>
<evidence type="ECO:0000269" key="11">
    <source>
    </source>
</evidence>
<evidence type="ECO:0000269" key="12">
    <source ref="13"/>
</evidence>
<evidence type="ECO:0000305" key="13"/>
<evidence type="ECO:0007744" key="14">
    <source>
    </source>
</evidence>
<dbReference type="EMBL" id="M16228">
    <property type="protein sequence ID" value="AAA41190.1"/>
    <property type="molecule type" value="mRNA"/>
</dbReference>
<dbReference type="EMBL" id="M16736">
    <property type="protein sequence ID" value="AAA41192.1"/>
    <property type="molecule type" value="mRNA"/>
</dbReference>
<dbReference type="EMBL" id="X06338">
    <property type="protein sequence ID" value="CAA29644.1"/>
    <property type="molecule type" value="mRNA"/>
</dbReference>
<dbReference type="EMBL" id="L21192">
    <property type="protein sequence ID" value="AAA41189.1"/>
    <property type="molecule type" value="Genomic_DNA"/>
</dbReference>
<dbReference type="EMBL" id="L21190">
    <property type="protein sequence ID" value="AAA41189.1"/>
    <property type="status" value="JOINED"/>
    <property type="molecule type" value="Genomic_DNA"/>
</dbReference>
<dbReference type="EMBL" id="L21191">
    <property type="protein sequence ID" value="AAA41189.1"/>
    <property type="status" value="JOINED"/>
    <property type="molecule type" value="Genomic_DNA"/>
</dbReference>
<dbReference type="EMBL" id="BC127502">
    <property type="protein sequence ID" value="AAI27503.1"/>
    <property type="molecule type" value="mRNA"/>
</dbReference>
<dbReference type="PIR" id="A26964">
    <property type="entry name" value="A26964"/>
</dbReference>
<dbReference type="RefSeq" id="NP_058891.1">
    <property type="nucleotide sequence ID" value="NM_017195.3"/>
</dbReference>
<dbReference type="SMR" id="P07936"/>
<dbReference type="BioGRID" id="248071">
    <property type="interactions" value="6"/>
</dbReference>
<dbReference type="FunCoup" id="P07936">
    <property type="interactions" value="268"/>
</dbReference>
<dbReference type="IntAct" id="P07936">
    <property type="interactions" value="1"/>
</dbReference>
<dbReference type="MINT" id="P07936"/>
<dbReference type="STRING" id="10116.ENSRNOP00000002091"/>
<dbReference type="GlyGen" id="P07936">
    <property type="glycosylation" value="1 site"/>
</dbReference>
<dbReference type="iPTMnet" id="P07936"/>
<dbReference type="PhosphoSitePlus" id="P07936"/>
<dbReference type="SwissPalm" id="P07936"/>
<dbReference type="jPOST" id="P07936"/>
<dbReference type="PaxDb" id="10116-ENSRNOP00000002091"/>
<dbReference type="Ensembl" id="ENSRNOT00000002091.5">
    <property type="protein sequence ID" value="ENSRNOP00000002091.3"/>
    <property type="gene ID" value="ENSRNOG00000001528.6"/>
</dbReference>
<dbReference type="GeneID" id="29423"/>
<dbReference type="KEGG" id="rno:29423"/>
<dbReference type="UCSC" id="RGD:62071">
    <property type="organism name" value="rat"/>
</dbReference>
<dbReference type="AGR" id="RGD:62071"/>
<dbReference type="CTD" id="2596"/>
<dbReference type="RGD" id="62071">
    <property type="gene designation" value="Gap43"/>
</dbReference>
<dbReference type="eggNOG" id="ENOG502RXWF">
    <property type="taxonomic scope" value="Eukaryota"/>
</dbReference>
<dbReference type="GeneTree" id="ENSGT00730000111265"/>
<dbReference type="HOGENOM" id="CLU_102989_0_0_1"/>
<dbReference type="InParanoid" id="P07936"/>
<dbReference type="OMA" id="TNQAKTP"/>
<dbReference type="OrthoDB" id="9397439at2759"/>
<dbReference type="PhylomeDB" id="P07936"/>
<dbReference type="TreeFam" id="TF333213"/>
<dbReference type="Reactome" id="R-RNO-373760">
    <property type="pathway name" value="L1CAM interactions"/>
</dbReference>
<dbReference type="PRO" id="PR:P07936"/>
<dbReference type="Proteomes" id="UP000002494">
    <property type="component" value="Chromosome 11"/>
</dbReference>
<dbReference type="Bgee" id="ENSRNOG00000001528">
    <property type="expression patterns" value="Expressed in frontal cortex and 16 other cell types or tissues"/>
</dbReference>
<dbReference type="GO" id="GO:0030424">
    <property type="term" value="C:axon"/>
    <property type="evidence" value="ECO:0000266"/>
    <property type="project" value="RGD"/>
</dbReference>
<dbReference type="GO" id="GO:0071944">
    <property type="term" value="C:cell periphery"/>
    <property type="evidence" value="ECO:0000266"/>
    <property type="project" value="RGD"/>
</dbReference>
<dbReference type="GO" id="GO:0005737">
    <property type="term" value="C:cytoplasm"/>
    <property type="evidence" value="ECO:0000266"/>
    <property type="project" value="RGD"/>
</dbReference>
<dbReference type="GO" id="GO:0030425">
    <property type="term" value="C:dendrite"/>
    <property type="evidence" value="ECO:0007669"/>
    <property type="project" value="UniProtKB-SubCell"/>
</dbReference>
<dbReference type="GO" id="GO:0031527">
    <property type="term" value="C:filopodium membrane"/>
    <property type="evidence" value="ECO:0000266"/>
    <property type="project" value="RGD"/>
</dbReference>
<dbReference type="GO" id="GO:0098982">
    <property type="term" value="C:GABA-ergic synapse"/>
    <property type="evidence" value="ECO:0000314"/>
    <property type="project" value="SynGO"/>
</dbReference>
<dbReference type="GO" id="GO:0030426">
    <property type="term" value="C:growth cone"/>
    <property type="evidence" value="ECO:0000304"/>
    <property type="project" value="RGD"/>
</dbReference>
<dbReference type="GO" id="GO:0032584">
    <property type="term" value="C:growth cone membrane"/>
    <property type="evidence" value="ECO:0007669"/>
    <property type="project" value="UniProtKB-SubCell"/>
</dbReference>
<dbReference type="GO" id="GO:0043204">
    <property type="term" value="C:perikaryon"/>
    <property type="evidence" value="ECO:0007669"/>
    <property type="project" value="UniProtKB-SubCell"/>
</dbReference>
<dbReference type="GO" id="GO:0005886">
    <property type="term" value="C:plasma membrane"/>
    <property type="evidence" value="ECO:0000266"/>
    <property type="project" value="RGD"/>
</dbReference>
<dbReference type="GO" id="GO:0014069">
    <property type="term" value="C:postsynaptic density"/>
    <property type="evidence" value="ECO:0000266"/>
    <property type="project" value="RGD"/>
</dbReference>
<dbReference type="GO" id="GO:0098793">
    <property type="term" value="C:presynapse"/>
    <property type="evidence" value="ECO:0000314"/>
    <property type="project" value="SynGO"/>
</dbReference>
<dbReference type="GO" id="GO:0005516">
    <property type="term" value="F:calmodulin binding"/>
    <property type="evidence" value="ECO:0000318"/>
    <property type="project" value="GO_Central"/>
</dbReference>
<dbReference type="GO" id="GO:0035727">
    <property type="term" value="F:lysophosphatidic acid binding"/>
    <property type="evidence" value="ECO:0000314"/>
    <property type="project" value="RGD"/>
</dbReference>
<dbReference type="GO" id="GO:1901981">
    <property type="term" value="F:phosphatidylinositol phosphate binding"/>
    <property type="evidence" value="ECO:0000314"/>
    <property type="project" value="RGD"/>
</dbReference>
<dbReference type="GO" id="GO:0001786">
    <property type="term" value="F:phosphatidylserine binding"/>
    <property type="evidence" value="ECO:0000314"/>
    <property type="project" value="RGD"/>
</dbReference>
<dbReference type="GO" id="GO:0048708">
    <property type="term" value="P:astrocyte differentiation"/>
    <property type="evidence" value="ECO:0000266"/>
    <property type="project" value="RGD"/>
</dbReference>
<dbReference type="GO" id="GO:0016198">
    <property type="term" value="P:axon choice point recognition"/>
    <property type="evidence" value="ECO:0000266"/>
    <property type="project" value="RGD"/>
</dbReference>
<dbReference type="GO" id="GO:0007411">
    <property type="term" value="P:axon guidance"/>
    <property type="evidence" value="ECO:0000266"/>
    <property type="project" value="RGD"/>
</dbReference>
<dbReference type="GO" id="GO:0031103">
    <property type="term" value="P:axon regeneration"/>
    <property type="evidence" value="ECO:0000318"/>
    <property type="project" value="GO_Central"/>
</dbReference>
<dbReference type="GO" id="GO:0045165">
    <property type="term" value="P:cell fate commitment"/>
    <property type="evidence" value="ECO:0000266"/>
    <property type="project" value="RGD"/>
</dbReference>
<dbReference type="GO" id="GO:0007399">
    <property type="term" value="P:nervous system development"/>
    <property type="evidence" value="ECO:0000270"/>
    <property type="project" value="RGD"/>
</dbReference>
<dbReference type="GO" id="GO:0060019">
    <property type="term" value="P:radial glial cell differentiation"/>
    <property type="evidence" value="ECO:0000266"/>
    <property type="project" value="RGD"/>
</dbReference>
<dbReference type="GO" id="GO:0051489">
    <property type="term" value="P:regulation of filopodium assembly"/>
    <property type="evidence" value="ECO:0000266"/>
    <property type="project" value="RGD"/>
</dbReference>
<dbReference type="GO" id="GO:0040008">
    <property type="term" value="P:regulation of growth"/>
    <property type="evidence" value="ECO:0007669"/>
    <property type="project" value="InterPro"/>
</dbReference>
<dbReference type="GO" id="GO:0099150">
    <property type="term" value="P:regulation of postsynaptic specialization assembly"/>
    <property type="evidence" value="ECO:0000314"/>
    <property type="project" value="SynGO"/>
</dbReference>
<dbReference type="GO" id="GO:0010996">
    <property type="term" value="P:response to auditory stimulus"/>
    <property type="evidence" value="ECO:0000270"/>
    <property type="project" value="RGD"/>
</dbReference>
<dbReference type="GO" id="GO:0042246">
    <property type="term" value="P:tissue regeneration"/>
    <property type="evidence" value="ECO:0000270"/>
    <property type="project" value="RGD"/>
</dbReference>
<dbReference type="FunFam" id="1.20.5.190:FF:000075">
    <property type="entry name" value="Neuromodulin"/>
    <property type="match status" value="1"/>
</dbReference>
<dbReference type="Gene3D" id="1.20.5.190">
    <property type="match status" value="1"/>
</dbReference>
<dbReference type="InterPro" id="IPR000048">
    <property type="entry name" value="IQ_motif_EF-hand-BS"/>
</dbReference>
<dbReference type="InterPro" id="IPR001422">
    <property type="entry name" value="Neuromodulin"/>
</dbReference>
<dbReference type="InterPro" id="IPR017454">
    <property type="entry name" value="Neuromodulin_C"/>
</dbReference>
<dbReference type="InterPro" id="IPR018947">
    <property type="entry name" value="Neuromodulin_gap-junction_N"/>
</dbReference>
<dbReference type="InterPro" id="IPR033137">
    <property type="entry name" value="Neuromodulin_P_site"/>
</dbReference>
<dbReference type="InterPro" id="IPR018243">
    <property type="entry name" value="Neuromodulin_palmitoyl_site"/>
</dbReference>
<dbReference type="PANTHER" id="PTHR10699">
    <property type="entry name" value="NEUROMODULIN"/>
    <property type="match status" value="1"/>
</dbReference>
<dbReference type="PANTHER" id="PTHR10699:SF15">
    <property type="entry name" value="NEUROMODULIN"/>
    <property type="match status" value="1"/>
</dbReference>
<dbReference type="Pfam" id="PF00612">
    <property type="entry name" value="IQ"/>
    <property type="match status" value="1"/>
</dbReference>
<dbReference type="Pfam" id="PF06614">
    <property type="entry name" value="Neuromodulin"/>
    <property type="match status" value="1"/>
</dbReference>
<dbReference type="Pfam" id="PF10580">
    <property type="entry name" value="Neuromodulin_N"/>
    <property type="match status" value="1"/>
</dbReference>
<dbReference type="PRINTS" id="PR00215">
    <property type="entry name" value="NEUROMODULIN"/>
</dbReference>
<dbReference type="SMART" id="SM00015">
    <property type="entry name" value="IQ"/>
    <property type="match status" value="1"/>
</dbReference>
<dbReference type="PROSITE" id="PS50096">
    <property type="entry name" value="IQ"/>
    <property type="match status" value="1"/>
</dbReference>
<dbReference type="PROSITE" id="PS00412">
    <property type="entry name" value="NEUROMODULIN_1"/>
    <property type="match status" value="1"/>
</dbReference>
<dbReference type="PROSITE" id="PS00413">
    <property type="entry name" value="NEUROMODULIN_2"/>
    <property type="match status" value="1"/>
</dbReference>